<evidence type="ECO:0000255" key="1">
    <source>
        <dbReference type="HAMAP-Rule" id="MF_00393"/>
    </source>
</evidence>
<feature type="chain" id="PRO_1000049426" description="Glycerol-3-phosphate acyltransferase">
    <location>
        <begin position="1"/>
        <end position="824"/>
    </location>
</feature>
<feature type="short sequence motif" description="HXXXXD motif">
    <location>
        <begin position="302"/>
        <end position="307"/>
    </location>
</feature>
<sequence>MSSLLNFYRKVLNVPLSLLVKSRAIPTDPVKELNLNLEQPIIYVLPYTSQTDLLILQKNCLSLNLPDPLQNNELNGQSLPRYVFLDEGRRFFKSKGAKSETESIFYRYLDLHRNNESLDVQLIPASVLWGRSPGKESEPHLRLMSSFQRIISMIWFGRDNFVRFSQALSLKYMVAEHGADEGIAQKLARVAKIHFAKQRYSAMGPRLPDRQAMFNKIIQSPAIKVAIEEEAKTKKISIEKARQEAEKIVNEIAADVSHESLRIADRVLSWLWNKLYQGINVQNGDRVRKLALEGHEIVYVPCHRSHMDYLLLSYLLYHQGLVPPHIAAGINLNFFPAGPIFRSWGAFFIRRTFKGNRLYSTIFREYLAELFYRGYSVEYFIEGGRSRTGRLLEPKTGMMSMTLQALQRGLTRPISIVPVYIGYEHVLEVDTYAKELRGAEKEKENAGLVLRVIKKLKNLGQCYVNFAEPIQVNNYLNQHFPEWKESQAEDSRPKWLNEAVDSVAHQVMININKAAAINAKNLIGSVLLASRQRALAREQLIEQVDSYLQLFKNVSYSDDAIVPNDNAEEMLNHVLTLPRSGVISEKDSFGEMIRLDRESAVLMTYYRNNIQHLFVLPSLVASIILHHESVSKDLIIKTVNRIYPFLKAELFLHFEENDVRNQVEAILTEFSAQRIVKYESDVLQINCVRVRALQLHAAGVREILQRYYISLSILLEHPEISRAALEKESRSIAQRLSILHGINAPEFFDKALFSTFSASLKAQGYFDSEGNCILEKAKEAEEILRSLISVEVQLTIQGAMEKVEEVENTETVVKTAEAVTEKNE</sequence>
<organism>
    <name type="scientific">Actinobacillus pleuropneumoniae serotype 5b (strain L20)</name>
    <dbReference type="NCBI Taxonomy" id="416269"/>
    <lineage>
        <taxon>Bacteria</taxon>
        <taxon>Pseudomonadati</taxon>
        <taxon>Pseudomonadota</taxon>
        <taxon>Gammaproteobacteria</taxon>
        <taxon>Pasteurellales</taxon>
        <taxon>Pasteurellaceae</taxon>
        <taxon>Actinobacillus</taxon>
    </lineage>
</organism>
<comment type="catalytic activity">
    <reaction evidence="1">
        <text>sn-glycerol 3-phosphate + an acyl-CoA = a 1-acyl-sn-glycero-3-phosphate + CoA</text>
        <dbReference type="Rhea" id="RHEA:15325"/>
        <dbReference type="ChEBI" id="CHEBI:57287"/>
        <dbReference type="ChEBI" id="CHEBI:57597"/>
        <dbReference type="ChEBI" id="CHEBI:57970"/>
        <dbReference type="ChEBI" id="CHEBI:58342"/>
        <dbReference type="EC" id="2.3.1.15"/>
    </reaction>
</comment>
<comment type="pathway">
    <text evidence="1">Phospholipid metabolism; CDP-diacylglycerol biosynthesis; CDP-diacylglycerol from sn-glycerol 3-phosphate: step 1/3.</text>
</comment>
<comment type="subcellular location">
    <subcellularLocation>
        <location evidence="1">Cell inner membrane</location>
        <topology evidence="1">Peripheral membrane protein</topology>
        <orientation evidence="1">Cytoplasmic side</orientation>
    </subcellularLocation>
</comment>
<comment type="domain">
    <text evidence="1">The HXXXXD motif is essential for acyltransferase activity and may constitute the binding site for the phosphate moiety of the glycerol-3-phosphate.</text>
</comment>
<comment type="similarity">
    <text evidence="1">Belongs to the GPAT/DAPAT family.</text>
</comment>
<proteinExistence type="inferred from homology"/>
<name>PLSB_ACTP2</name>
<keyword id="KW-0012">Acyltransferase</keyword>
<keyword id="KW-0997">Cell inner membrane</keyword>
<keyword id="KW-1003">Cell membrane</keyword>
<keyword id="KW-0444">Lipid biosynthesis</keyword>
<keyword id="KW-0443">Lipid metabolism</keyword>
<keyword id="KW-0472">Membrane</keyword>
<keyword id="KW-0594">Phospholipid biosynthesis</keyword>
<keyword id="KW-1208">Phospholipid metabolism</keyword>
<keyword id="KW-1185">Reference proteome</keyword>
<keyword id="KW-0808">Transferase</keyword>
<reference key="1">
    <citation type="journal article" date="2008" name="J. Bacteriol.">
        <title>The complete genome sequence of Actinobacillus pleuropneumoniae L20 (serotype 5b).</title>
        <authorList>
            <person name="Foote S.J."/>
            <person name="Bosse J.T."/>
            <person name="Bouevitch A.B."/>
            <person name="Langford P.R."/>
            <person name="Young N.M."/>
            <person name="Nash J.H.E."/>
        </authorList>
    </citation>
    <scope>NUCLEOTIDE SEQUENCE [LARGE SCALE GENOMIC DNA]</scope>
    <source>
        <strain>L20</strain>
    </source>
</reference>
<gene>
    <name evidence="1" type="primary">plsB</name>
    <name type="ordered locus">APL_1107</name>
</gene>
<accession>A3N1B3</accession>
<dbReference type="EC" id="2.3.1.15" evidence="1"/>
<dbReference type="EMBL" id="CP000569">
    <property type="protein sequence ID" value="ABN74199.1"/>
    <property type="molecule type" value="Genomic_DNA"/>
</dbReference>
<dbReference type="RefSeq" id="WP_009875486.1">
    <property type="nucleotide sequence ID" value="NC_009053.1"/>
</dbReference>
<dbReference type="SMR" id="A3N1B3"/>
<dbReference type="STRING" id="416269.APL_1107"/>
<dbReference type="EnsemblBacteria" id="ABN74199">
    <property type="protein sequence ID" value="ABN74199"/>
    <property type="gene ID" value="APL_1107"/>
</dbReference>
<dbReference type="KEGG" id="apl:APL_1107"/>
<dbReference type="PATRIC" id="fig|416269.6.peg.1155"/>
<dbReference type="eggNOG" id="COG2937">
    <property type="taxonomic scope" value="Bacteria"/>
</dbReference>
<dbReference type="HOGENOM" id="CLU_015407_0_0_6"/>
<dbReference type="UniPathway" id="UPA00557">
    <property type="reaction ID" value="UER00612"/>
</dbReference>
<dbReference type="Proteomes" id="UP000001432">
    <property type="component" value="Chromosome"/>
</dbReference>
<dbReference type="GO" id="GO:0005886">
    <property type="term" value="C:plasma membrane"/>
    <property type="evidence" value="ECO:0007669"/>
    <property type="project" value="UniProtKB-SubCell"/>
</dbReference>
<dbReference type="GO" id="GO:0004366">
    <property type="term" value="F:glycerol-3-phosphate O-acyltransferase activity"/>
    <property type="evidence" value="ECO:0007669"/>
    <property type="project" value="UniProtKB-UniRule"/>
</dbReference>
<dbReference type="GO" id="GO:0016024">
    <property type="term" value="P:CDP-diacylglycerol biosynthetic process"/>
    <property type="evidence" value="ECO:0007669"/>
    <property type="project" value="UniProtKB-UniRule"/>
</dbReference>
<dbReference type="GO" id="GO:0006631">
    <property type="term" value="P:fatty acid metabolic process"/>
    <property type="evidence" value="ECO:0007669"/>
    <property type="project" value="TreeGrafter"/>
</dbReference>
<dbReference type="CDD" id="cd07993">
    <property type="entry name" value="LPLAT_DHAPAT-like"/>
    <property type="match status" value="1"/>
</dbReference>
<dbReference type="HAMAP" id="MF_00393">
    <property type="entry name" value="Glyc3P_acyltrans"/>
    <property type="match status" value="1"/>
</dbReference>
<dbReference type="InterPro" id="IPR022284">
    <property type="entry name" value="GPAT/DHAPAT"/>
</dbReference>
<dbReference type="InterPro" id="IPR045520">
    <property type="entry name" value="GPAT/DHAPAT_C"/>
</dbReference>
<dbReference type="InterPro" id="IPR041728">
    <property type="entry name" value="GPAT/DHAPAT_LPLAT"/>
</dbReference>
<dbReference type="InterPro" id="IPR028354">
    <property type="entry name" value="GPAT_PlsB"/>
</dbReference>
<dbReference type="InterPro" id="IPR002123">
    <property type="entry name" value="Plipid/glycerol_acylTrfase"/>
</dbReference>
<dbReference type="NCBIfam" id="TIGR03703">
    <property type="entry name" value="plsB"/>
    <property type="match status" value="1"/>
</dbReference>
<dbReference type="NCBIfam" id="NF003441">
    <property type="entry name" value="PRK04974.1"/>
    <property type="match status" value="1"/>
</dbReference>
<dbReference type="PANTHER" id="PTHR12563:SF17">
    <property type="entry name" value="DIHYDROXYACETONE PHOSPHATE ACYLTRANSFERASE"/>
    <property type="match status" value="1"/>
</dbReference>
<dbReference type="PANTHER" id="PTHR12563">
    <property type="entry name" value="GLYCEROL-3-PHOSPHATE ACYLTRANSFERASE"/>
    <property type="match status" value="1"/>
</dbReference>
<dbReference type="Pfam" id="PF01553">
    <property type="entry name" value="Acyltransferase"/>
    <property type="match status" value="1"/>
</dbReference>
<dbReference type="Pfam" id="PF19277">
    <property type="entry name" value="GPAT_C"/>
    <property type="match status" value="1"/>
</dbReference>
<dbReference type="PIRSF" id="PIRSF500064">
    <property type="entry name" value="GPAT"/>
    <property type="match status" value="1"/>
</dbReference>
<dbReference type="PIRSF" id="PIRSF000437">
    <property type="entry name" value="GPAT_DHAPAT"/>
    <property type="match status" value="1"/>
</dbReference>
<dbReference type="SMART" id="SM00563">
    <property type="entry name" value="PlsC"/>
    <property type="match status" value="1"/>
</dbReference>
<dbReference type="SUPFAM" id="SSF69593">
    <property type="entry name" value="Glycerol-3-phosphate (1)-acyltransferase"/>
    <property type="match status" value="1"/>
</dbReference>
<protein>
    <recommendedName>
        <fullName evidence="1">Glycerol-3-phosphate acyltransferase</fullName>
        <shortName evidence="1">GPAT</shortName>
        <ecNumber evidence="1">2.3.1.15</ecNumber>
    </recommendedName>
</protein>